<organism>
    <name type="scientific">Buxus microphylla</name>
    <name type="common">Littleleaf boxwood</name>
    <name type="synonym">Japanese boxwood</name>
    <dbReference type="NCBI Taxonomy" id="153571"/>
    <lineage>
        <taxon>Eukaryota</taxon>
        <taxon>Viridiplantae</taxon>
        <taxon>Streptophyta</taxon>
        <taxon>Embryophyta</taxon>
        <taxon>Tracheophyta</taxon>
        <taxon>Spermatophyta</taxon>
        <taxon>Magnoliopsida</taxon>
        <taxon>Buxales</taxon>
        <taxon>Buxaceae</taxon>
        <taxon>Buxus</taxon>
    </lineage>
</organism>
<sequence length="507" mass="59697">MKELQGYLEIYRSRQQDFLYPLLFQEYIYVLAHDHGLNRLILYESMENLGYDNKSSSLVVKRLIARMYQQNHLIISANNSNQNKFVGHNKDFYSQMILEGFAVIVEIPFSLRFVSSLEGKEILESHNLRSIHSIFPFLEDTLSHLNYVSDILIPHPIHLEILVQSLRCWVQDAPSLHLLRFFLHEYHNWNNFISPKKSIFIFSKKNKRFFLFLYNSYVYECESIFVFLCKQSSHLRSTSSGALLERTHFYVKIEDLVIVFRNDFQTILWLFKDPLMHYVRYQGKSILASKGTPLLMNKWKYYLVNFWQCNFYLWSQSGRIHIKQLSNHSLDFLGYLSSVRLNPSVVKSQMLENSFIIDSAINKFDTIVPIISLIGSLAKAKFCNVSGHPISKPVRADSSDSDIIDRFGQICRNLSHYHSGSSKKTSLYRIKYILRLSCARTLARKHKSTVRAFLKRLGLELLEEFLTEEEHVLSLIFPRASFILRRLYRGRIWYLDIIRINDLANHQ</sequence>
<reference key="1">
    <citation type="journal article" date="2007" name="Mol. Phylogenet. Evol.">
        <title>Phylogenetic and evolutionary implications of complete chloroplast genome sequences of four early-diverging angiosperms: Buxus (Buxaceae), Chloranthus (Chloranthaceae), Dioscorea (Dioscoreaceae), and Illicium (Schisandraceae).</title>
        <authorList>
            <person name="Hansen D.R."/>
            <person name="Dastidar S.G."/>
            <person name="Cai Z."/>
            <person name="Penaflor C."/>
            <person name="Kuehl J.V."/>
            <person name="Boore J.L."/>
            <person name="Jansen R.K."/>
        </authorList>
    </citation>
    <scope>NUCLEOTIDE SEQUENCE [LARGE SCALE GENOMIC DNA]</scope>
</reference>
<feature type="chain" id="PRO_0000355917" description="Maturase K">
    <location>
        <begin position="1"/>
        <end position="507"/>
    </location>
</feature>
<name>MATK_BUXMI</name>
<keyword id="KW-0150">Chloroplast</keyword>
<keyword id="KW-0507">mRNA processing</keyword>
<keyword id="KW-0934">Plastid</keyword>
<keyword id="KW-0694">RNA-binding</keyword>
<keyword id="KW-0819">tRNA processing</keyword>
<proteinExistence type="inferred from homology"/>
<accession>A6MM17</accession>
<gene>
    <name evidence="1" type="primary">matK</name>
</gene>
<dbReference type="EMBL" id="EF380351">
    <property type="protein sequence ID" value="ABQ45230.1"/>
    <property type="molecule type" value="Genomic_DNA"/>
</dbReference>
<dbReference type="RefSeq" id="YP_001294165.1">
    <property type="nucleotide sequence ID" value="NC_009599.1"/>
</dbReference>
<dbReference type="GeneID" id="5236929"/>
<dbReference type="GO" id="GO:0009507">
    <property type="term" value="C:chloroplast"/>
    <property type="evidence" value="ECO:0007669"/>
    <property type="project" value="UniProtKB-SubCell"/>
</dbReference>
<dbReference type="GO" id="GO:0003723">
    <property type="term" value="F:RNA binding"/>
    <property type="evidence" value="ECO:0007669"/>
    <property type="project" value="UniProtKB-KW"/>
</dbReference>
<dbReference type="GO" id="GO:0006397">
    <property type="term" value="P:mRNA processing"/>
    <property type="evidence" value="ECO:0007669"/>
    <property type="project" value="UniProtKB-KW"/>
</dbReference>
<dbReference type="GO" id="GO:0008380">
    <property type="term" value="P:RNA splicing"/>
    <property type="evidence" value="ECO:0007669"/>
    <property type="project" value="UniProtKB-UniRule"/>
</dbReference>
<dbReference type="GO" id="GO:0008033">
    <property type="term" value="P:tRNA processing"/>
    <property type="evidence" value="ECO:0007669"/>
    <property type="project" value="UniProtKB-KW"/>
</dbReference>
<dbReference type="HAMAP" id="MF_01390">
    <property type="entry name" value="MatK"/>
    <property type="match status" value="1"/>
</dbReference>
<dbReference type="InterPro" id="IPR024937">
    <property type="entry name" value="Domain_X"/>
</dbReference>
<dbReference type="InterPro" id="IPR002866">
    <property type="entry name" value="Maturase_MatK"/>
</dbReference>
<dbReference type="InterPro" id="IPR024942">
    <property type="entry name" value="Maturase_MatK_N"/>
</dbReference>
<dbReference type="PANTHER" id="PTHR34811">
    <property type="entry name" value="MATURASE K"/>
    <property type="match status" value="1"/>
</dbReference>
<dbReference type="PANTHER" id="PTHR34811:SF1">
    <property type="entry name" value="MATURASE K"/>
    <property type="match status" value="1"/>
</dbReference>
<dbReference type="Pfam" id="PF01348">
    <property type="entry name" value="Intron_maturas2"/>
    <property type="match status" value="1"/>
</dbReference>
<dbReference type="Pfam" id="PF01824">
    <property type="entry name" value="MatK_N"/>
    <property type="match status" value="1"/>
</dbReference>
<comment type="function">
    <text evidence="1">Usually encoded in the trnK tRNA gene intron. Probably assists in splicing its own and other chloroplast group II introns.</text>
</comment>
<comment type="subcellular location">
    <subcellularLocation>
        <location>Plastid</location>
        <location>Chloroplast</location>
    </subcellularLocation>
</comment>
<comment type="similarity">
    <text evidence="1">Belongs to the intron maturase 2 family. MatK subfamily.</text>
</comment>
<geneLocation type="chloroplast"/>
<evidence type="ECO:0000255" key="1">
    <source>
        <dbReference type="HAMAP-Rule" id="MF_01390"/>
    </source>
</evidence>
<protein>
    <recommendedName>
        <fullName evidence="1">Maturase K</fullName>
    </recommendedName>
    <alternativeName>
        <fullName evidence="1">Intron maturase</fullName>
    </alternativeName>
</protein>